<name>TBC3I_HUMAN</name>
<sequence length="549" mass="62205">MDVVEVAGSWWAQEREDIIMKYEKGHRAGLPEDKGPKPFRSYNNNVDHLGIVHETELPPLTAREAKQIRREISRKSKWVDMLGDWEKYKSSRKLIDRAYKGMPMNIRGPMWSVLLNTEEMKMKNPGRYQIMKEKGKRSSEHIQRIDRDVSGTLRKHIFFRDRYGTKQRELLHILLAYEEYNPEVGYCRDLSHIAALFLLYLPEEDAFWALVQLLASERHSLQGFHSPNGGTVQGLQDQQEHVVATSQPKTMGHQDKKDLCGQCSPLGCLIRILIDGISLGLTLRLWDVYLVEGEQALMPITRIAFKVQQKRLTKTSRCGPWARFCNRFVDTWARDEDTVLKHLRASMKKLTRKQGDLPPPAKPEQGSSASRPVPASRGGKTLCKGDRQAPPGPPARFPRPIWSASPPRAPRSSTPCPGGAVREDTYPVGTQGVPSPALAQGGPQGSWRFLQWNSMPRLPTDLDVEGPWFRHYDFRQSCWVRAISQEDQLAPCWQAEHPAERVRSAFAAPSTDSDQGTPFRARDEQQCAPTSGPCLCGLHLESSQFPPGF</sequence>
<reference key="1">
    <citation type="journal article" date="2006" name="Nature">
        <title>DNA sequence of human chromosome 17 and analysis of rearrangement in the human lineage.</title>
        <authorList>
            <person name="Zody M.C."/>
            <person name="Garber M."/>
            <person name="Adams D.J."/>
            <person name="Sharpe T."/>
            <person name="Harrow J."/>
            <person name="Lupski J.R."/>
            <person name="Nicholson C."/>
            <person name="Searle S.M."/>
            <person name="Wilming L."/>
            <person name="Young S.K."/>
            <person name="Abouelleil A."/>
            <person name="Allen N.R."/>
            <person name="Bi W."/>
            <person name="Bloom T."/>
            <person name="Borowsky M.L."/>
            <person name="Bugalter B.E."/>
            <person name="Butler J."/>
            <person name="Chang J.L."/>
            <person name="Chen C.-K."/>
            <person name="Cook A."/>
            <person name="Corum B."/>
            <person name="Cuomo C.A."/>
            <person name="de Jong P.J."/>
            <person name="DeCaprio D."/>
            <person name="Dewar K."/>
            <person name="FitzGerald M."/>
            <person name="Gilbert J."/>
            <person name="Gibson R."/>
            <person name="Gnerre S."/>
            <person name="Goldstein S."/>
            <person name="Grafham D.V."/>
            <person name="Grocock R."/>
            <person name="Hafez N."/>
            <person name="Hagopian D.S."/>
            <person name="Hart E."/>
            <person name="Norman C.H."/>
            <person name="Humphray S."/>
            <person name="Jaffe D.B."/>
            <person name="Jones M."/>
            <person name="Kamal M."/>
            <person name="Khodiyar V.K."/>
            <person name="LaButti K."/>
            <person name="Laird G."/>
            <person name="Lehoczky J."/>
            <person name="Liu X."/>
            <person name="Lokyitsang T."/>
            <person name="Loveland J."/>
            <person name="Lui A."/>
            <person name="Macdonald P."/>
            <person name="Major J.E."/>
            <person name="Matthews L."/>
            <person name="Mauceli E."/>
            <person name="McCarroll S.A."/>
            <person name="Mihalev A.H."/>
            <person name="Mudge J."/>
            <person name="Nguyen C."/>
            <person name="Nicol R."/>
            <person name="O'Leary S.B."/>
            <person name="Osoegawa K."/>
            <person name="Schwartz D.C."/>
            <person name="Shaw-Smith C."/>
            <person name="Stankiewicz P."/>
            <person name="Steward C."/>
            <person name="Swarbreck D."/>
            <person name="Venkataraman V."/>
            <person name="Whittaker C.A."/>
            <person name="Yang X."/>
            <person name="Zimmer A.R."/>
            <person name="Bradley A."/>
            <person name="Hubbard T."/>
            <person name="Birren B.W."/>
            <person name="Rogers J."/>
            <person name="Lander E.S."/>
            <person name="Nusbaum C."/>
        </authorList>
    </citation>
    <scope>NUCLEOTIDE SEQUENCE [LARGE SCALE GENOMIC DNA]</scope>
</reference>
<reference key="2">
    <citation type="journal article" date="2010" name="Science">
        <title>Diversity of human copy number variation and multicopy genes.</title>
        <authorList>
            <person name="Sudmant P.H."/>
            <person name="Kitzman J.O."/>
            <person name="Antonacci F."/>
            <person name="Alkan C."/>
            <person name="Malig M."/>
            <person name="Tsalenko A."/>
            <person name="Sampas N."/>
            <person name="Bruhn L."/>
            <person name="Shendure J."/>
            <person name="Eichler E.E."/>
        </authorList>
    </citation>
    <scope>MISCELLANEOUS</scope>
    <scope>COPY NUMBER VARIATION</scope>
</reference>
<gene>
    <name evidence="5" type="primary">TBC1D3I</name>
</gene>
<evidence type="ECO:0000250" key="1">
    <source>
        <dbReference type="UniProtKB" id="Q8IZP1"/>
    </source>
</evidence>
<evidence type="ECO:0000255" key="2">
    <source>
        <dbReference type="PROSITE-ProRule" id="PRU00163"/>
    </source>
</evidence>
<evidence type="ECO:0000256" key="3">
    <source>
        <dbReference type="SAM" id="MobiDB-lite"/>
    </source>
</evidence>
<evidence type="ECO:0000305" key="4"/>
<evidence type="ECO:0000312" key="5">
    <source>
        <dbReference type="HGNC" id="HGNC:32709"/>
    </source>
</evidence>
<dbReference type="EMBL" id="AC243829">
    <property type="status" value="NOT_ANNOTATED_CDS"/>
    <property type="molecule type" value="Genomic_DNA"/>
</dbReference>
<dbReference type="CCDS" id="CCDS74039.1"/>
<dbReference type="RefSeq" id="NP_001278392.1">
    <property type="nucleotide sequence ID" value="NM_001291463.2"/>
</dbReference>
<dbReference type="RefSeq" id="XP_006722287.1">
    <property type="nucleotide sequence ID" value="XM_006722224.4"/>
</dbReference>
<dbReference type="RefSeq" id="XP_054185200.1">
    <property type="nucleotide sequence ID" value="XM_054329225.1"/>
</dbReference>
<dbReference type="RefSeq" id="XP_054186056.1">
    <property type="nucleotide sequence ID" value="XM_054330081.1"/>
</dbReference>
<dbReference type="SMR" id="A0A087WXS9"/>
<dbReference type="FunCoup" id="A0A087WXS9">
    <property type="interactions" value="50"/>
</dbReference>
<dbReference type="BioMuta" id="TBC1D3I"/>
<dbReference type="jPOST" id="A0A087WXS9"/>
<dbReference type="MassIVE" id="A0A087WXS9"/>
<dbReference type="PaxDb" id="9606-ENSP00000481258"/>
<dbReference type="PeptideAtlas" id="A0A087WXS9"/>
<dbReference type="Antibodypedia" id="75726">
    <property type="antibodies" value="1 antibodies from 1 providers"/>
</dbReference>
<dbReference type="DNASU" id="102724862"/>
<dbReference type="Ensembl" id="ENST00000618421.4">
    <property type="protein sequence ID" value="ENSP00000478802.1"/>
    <property type="gene ID" value="ENSG00000282144.2"/>
</dbReference>
<dbReference type="Ensembl" id="ENST00000619234.4">
    <property type="protein sequence ID" value="ENSP00000478225.1"/>
    <property type="gene ID" value="ENSG00000275861.4"/>
</dbReference>
<dbReference type="Ensembl" id="ENST00000621034.2">
    <property type="protein sequence ID" value="ENSP00000481258.1"/>
    <property type="gene ID" value="ENSG00000274933.6"/>
</dbReference>
<dbReference type="GeneID" id="102724862"/>
<dbReference type="KEGG" id="hsa:102724862"/>
<dbReference type="MANE-Select" id="ENST00000621034.2">
    <property type="protein sequence ID" value="ENSP00000481258.1"/>
    <property type="RefSeq nucleotide sequence ID" value="NM_001291463.2"/>
    <property type="RefSeq protein sequence ID" value="NP_001278392.1"/>
</dbReference>
<dbReference type="UCSC" id="uc032fbr.2">
    <property type="organism name" value="human"/>
</dbReference>
<dbReference type="AGR" id="HGNC:32709"/>
<dbReference type="CTD" id="102724862"/>
<dbReference type="GeneCards" id="TBC1D3I"/>
<dbReference type="HGNC" id="HGNC:32709">
    <property type="gene designation" value="TBC1D3I"/>
</dbReference>
<dbReference type="HPA" id="ENSG00000274933">
    <property type="expression patterns" value="Tissue enriched (testis)"/>
</dbReference>
<dbReference type="neXtProt" id="NX_A0A087WXS9"/>
<dbReference type="VEuPathDB" id="HostDB:ENSG00000274933"/>
<dbReference type="eggNOG" id="KOG1102">
    <property type="taxonomic scope" value="Eukaryota"/>
</dbReference>
<dbReference type="GeneTree" id="ENSGT00940000163624"/>
<dbReference type="InParanoid" id="A0A087WXS9"/>
<dbReference type="OrthoDB" id="9535050at2759"/>
<dbReference type="PAN-GO" id="A0A087WXS9">
    <property type="GO annotations" value="2 GO annotations based on evolutionary models"/>
</dbReference>
<dbReference type="PhylomeDB" id="A0A087WXS9"/>
<dbReference type="BioGRID-ORCS" id="102724862">
    <property type="hits" value="9 hits in 115 CRISPR screens"/>
</dbReference>
<dbReference type="GenomeRNAi" id="102724862"/>
<dbReference type="Pharos" id="A0A087WXS9">
    <property type="development level" value="Tdark"/>
</dbReference>
<dbReference type="PRO" id="PR:A0A087WXS9"/>
<dbReference type="Proteomes" id="UP000005640">
    <property type="component" value="Chromosome 17"/>
</dbReference>
<dbReference type="RNAct" id="A0A087WXS9">
    <property type="molecule type" value="protein"/>
</dbReference>
<dbReference type="Bgee" id="ENSG00000274933">
    <property type="expression patterns" value="Expressed in male germ line stem cell (sensu Vertebrata) in testis and 93 other cell types or tissues"/>
</dbReference>
<dbReference type="ExpressionAtlas" id="A0A087WXS9">
    <property type="expression patterns" value="baseline and differential"/>
</dbReference>
<dbReference type="GO" id="GO:0005886">
    <property type="term" value="C:plasma membrane"/>
    <property type="evidence" value="ECO:0007669"/>
    <property type="project" value="UniProtKB-SubCell"/>
</dbReference>
<dbReference type="GO" id="GO:0005096">
    <property type="term" value="F:GTPase activator activity"/>
    <property type="evidence" value="ECO:0000318"/>
    <property type="project" value="GO_Central"/>
</dbReference>
<dbReference type="FunFam" id="1.10.10.750:FF:000001">
    <property type="entry name" value="TBC1 domain family member 10A"/>
    <property type="match status" value="1"/>
</dbReference>
<dbReference type="FunFam" id="1.10.8.270:FF:000016">
    <property type="entry name" value="TBC1 domain family member 2A"/>
    <property type="match status" value="1"/>
</dbReference>
<dbReference type="FunFam" id="1.10.472.80:FF:000058">
    <property type="entry name" value="Ubiquitin specific peptidase 6"/>
    <property type="match status" value="1"/>
</dbReference>
<dbReference type="Gene3D" id="1.10.8.270">
    <property type="entry name" value="putative rabgap domain of human tbc1 domain family member 14 like domains"/>
    <property type="match status" value="1"/>
</dbReference>
<dbReference type="Gene3D" id="1.10.10.750">
    <property type="entry name" value="Ypt/Rab-GAP domain of gyp1p, domain 1"/>
    <property type="match status" value="1"/>
</dbReference>
<dbReference type="Gene3D" id="1.10.472.80">
    <property type="entry name" value="Ypt/Rab-GAP domain of gyp1p, domain 3"/>
    <property type="match status" value="1"/>
</dbReference>
<dbReference type="InterPro" id="IPR000195">
    <property type="entry name" value="Rab-GAP-TBC_dom"/>
</dbReference>
<dbReference type="InterPro" id="IPR035969">
    <property type="entry name" value="Rab-GAP_TBC_sf"/>
</dbReference>
<dbReference type="InterPro" id="IPR050302">
    <property type="entry name" value="Rab_GAP_TBC_domain"/>
</dbReference>
<dbReference type="PANTHER" id="PTHR47219">
    <property type="entry name" value="RAB GTPASE-ACTIVATING PROTEIN 1-LIKE"/>
    <property type="match status" value="1"/>
</dbReference>
<dbReference type="PANTHER" id="PTHR47219:SF25">
    <property type="entry name" value="RAB-GAP TBC DOMAIN-CONTAINING PROTEIN"/>
    <property type="match status" value="1"/>
</dbReference>
<dbReference type="Pfam" id="PF00566">
    <property type="entry name" value="RabGAP-TBC"/>
    <property type="match status" value="1"/>
</dbReference>
<dbReference type="SMART" id="SM00164">
    <property type="entry name" value="TBC"/>
    <property type="match status" value="1"/>
</dbReference>
<dbReference type="SUPFAM" id="SSF47923">
    <property type="entry name" value="Ypt/Rab-GAP domain of gyp1p"/>
    <property type="match status" value="1"/>
</dbReference>
<dbReference type="PROSITE" id="PS50086">
    <property type="entry name" value="TBC_RABGAP"/>
    <property type="match status" value="1"/>
</dbReference>
<organism>
    <name type="scientific">Homo sapiens</name>
    <name type="common">Human</name>
    <dbReference type="NCBI Taxonomy" id="9606"/>
    <lineage>
        <taxon>Eukaryota</taxon>
        <taxon>Metazoa</taxon>
        <taxon>Chordata</taxon>
        <taxon>Craniata</taxon>
        <taxon>Vertebrata</taxon>
        <taxon>Euteleostomi</taxon>
        <taxon>Mammalia</taxon>
        <taxon>Eutheria</taxon>
        <taxon>Euarchontoglires</taxon>
        <taxon>Primates</taxon>
        <taxon>Haplorrhini</taxon>
        <taxon>Catarrhini</taxon>
        <taxon>Hominidae</taxon>
        <taxon>Homo</taxon>
    </lineage>
</organism>
<protein>
    <recommendedName>
        <fullName evidence="5">TBC1 domain family member 3I</fullName>
    </recommendedName>
</protein>
<keyword id="KW-1003">Cell membrane</keyword>
<keyword id="KW-0343">GTPase activation</keyword>
<keyword id="KW-0449">Lipoprotein</keyword>
<keyword id="KW-0472">Membrane</keyword>
<keyword id="KW-0564">Palmitate</keyword>
<keyword id="KW-1185">Reference proteome</keyword>
<keyword id="KW-0832">Ubl conjugation</keyword>
<feature type="chain" id="PRO_0000431606" description="TBC1 domain family member 3I">
    <location>
        <begin position="1"/>
        <end position="549"/>
    </location>
</feature>
<feature type="domain" description="Rab-GAP TBC" evidence="2">
    <location>
        <begin position="101"/>
        <end position="293"/>
    </location>
</feature>
<feature type="region of interest" description="Disordered" evidence="3">
    <location>
        <begin position="350"/>
        <end position="443"/>
    </location>
</feature>
<feature type="region of interest" description="Disordered" evidence="3">
    <location>
        <begin position="507"/>
        <end position="526"/>
    </location>
</feature>
<feature type="compositionally biased region" description="Low complexity" evidence="3">
    <location>
        <begin position="398"/>
        <end position="417"/>
    </location>
</feature>
<feature type="lipid moiety-binding region" description="S-palmitoyl cysteine" evidence="1">
    <location>
        <position position="318"/>
    </location>
</feature>
<feature type="lipid moiety-binding region" description="S-palmitoyl cysteine" evidence="1">
    <location>
        <position position="325"/>
    </location>
</feature>
<comment type="function">
    <text evidence="1">Acts as a GTPase activating protein for RAB5. Does not act on RAB4 or RAB11 (By similarity).</text>
</comment>
<comment type="subcellular location">
    <subcellularLocation>
        <location evidence="1">Cell membrane</location>
        <topology evidence="1">Lipid-anchor</topology>
    </subcellularLocation>
    <text evidence="1">Associated with lipid rafts.</text>
</comment>
<comment type="PTM">
    <text evidence="1">Ubiquitinated by a CUL7-based E3 ligase, which leads to proteasomal degradation.</text>
</comment>
<comment type="PTM">
    <text evidence="1">Palmitoylation is required for membrane localization and protects TBC1D3 from ubiquitination.</text>
</comment>
<comment type="miscellaneous">
    <text evidence="4">TBC1D3 is encoded by a collection of very similar paralogs with multiple copies of each paralog, some human genomes encoding well over 50 copies depending on ethnic origin of the donor.</text>
</comment>
<proteinExistence type="inferred from homology"/>
<accession>A0A087WXS9</accession>